<name>Y577_BURP6</name>
<sequence length="297" mass="33195">MRIVLITGISGSGKSVALNALEDAGYYCVDNLPPHVLPELARYLAHEGQNRLAVAIDARSSASLDEMPGLIRALSREHDVRVLFLNASTQALIQRFSETRRRHPLSGSPSHDADVGLLVSLEEAIERERELVAPLAEFGHQIDTSNLRANVLRTWVKRFIEQKNDDLVLMFESFGFKRGVPLDADFMFDVRALPNPYYDHELRPLTGLDQPVVAFLDALPVVHQMLDDIETFLVKWLPHFREDNRSYLTVAIGCTGGQHRSVFLAETLAARLSRQASVIVRHRDAPVAVDASSRLVT</sequence>
<dbReference type="EMBL" id="CP000570">
    <property type="protein sequence ID" value="ABN84995.1"/>
    <property type="molecule type" value="Genomic_DNA"/>
</dbReference>
<dbReference type="SMR" id="A3N5K8"/>
<dbReference type="KEGG" id="bpd:BURPS668_0577"/>
<dbReference type="HOGENOM" id="CLU_059558_1_1_4"/>
<dbReference type="GO" id="GO:0005524">
    <property type="term" value="F:ATP binding"/>
    <property type="evidence" value="ECO:0007669"/>
    <property type="project" value="UniProtKB-UniRule"/>
</dbReference>
<dbReference type="GO" id="GO:0005525">
    <property type="term" value="F:GTP binding"/>
    <property type="evidence" value="ECO:0007669"/>
    <property type="project" value="UniProtKB-UniRule"/>
</dbReference>
<dbReference type="Gene3D" id="3.40.50.300">
    <property type="entry name" value="P-loop containing nucleotide triphosphate hydrolases"/>
    <property type="match status" value="1"/>
</dbReference>
<dbReference type="HAMAP" id="MF_00636">
    <property type="entry name" value="RapZ_like"/>
    <property type="match status" value="1"/>
</dbReference>
<dbReference type="InterPro" id="IPR027417">
    <property type="entry name" value="P-loop_NTPase"/>
</dbReference>
<dbReference type="InterPro" id="IPR005337">
    <property type="entry name" value="RapZ-like"/>
</dbReference>
<dbReference type="InterPro" id="IPR053930">
    <property type="entry name" value="RapZ-like_N"/>
</dbReference>
<dbReference type="InterPro" id="IPR053931">
    <property type="entry name" value="RapZ_C"/>
</dbReference>
<dbReference type="NCBIfam" id="NF003828">
    <property type="entry name" value="PRK05416.1"/>
    <property type="match status" value="1"/>
</dbReference>
<dbReference type="PANTHER" id="PTHR30448">
    <property type="entry name" value="RNASE ADAPTER PROTEIN RAPZ"/>
    <property type="match status" value="1"/>
</dbReference>
<dbReference type="PANTHER" id="PTHR30448:SF0">
    <property type="entry name" value="RNASE ADAPTER PROTEIN RAPZ"/>
    <property type="match status" value="1"/>
</dbReference>
<dbReference type="Pfam" id="PF22740">
    <property type="entry name" value="PapZ_C"/>
    <property type="match status" value="1"/>
</dbReference>
<dbReference type="Pfam" id="PF03668">
    <property type="entry name" value="RapZ-like_N"/>
    <property type="match status" value="1"/>
</dbReference>
<dbReference type="PIRSF" id="PIRSF005052">
    <property type="entry name" value="P-loopkin"/>
    <property type="match status" value="1"/>
</dbReference>
<dbReference type="SUPFAM" id="SSF52540">
    <property type="entry name" value="P-loop containing nucleoside triphosphate hydrolases"/>
    <property type="match status" value="1"/>
</dbReference>
<gene>
    <name type="ordered locus">BURPS668_0577</name>
</gene>
<comment type="function">
    <text evidence="1">Displays ATPase and GTPase activities.</text>
</comment>
<comment type="similarity">
    <text evidence="1">Belongs to the RapZ-like family.</text>
</comment>
<protein>
    <recommendedName>
        <fullName evidence="1">Nucleotide-binding protein BURPS668_0577</fullName>
    </recommendedName>
</protein>
<evidence type="ECO:0000255" key="1">
    <source>
        <dbReference type="HAMAP-Rule" id="MF_00636"/>
    </source>
</evidence>
<reference key="1">
    <citation type="journal article" date="2010" name="Genome Biol. Evol.">
        <title>Continuing evolution of Burkholderia mallei through genome reduction and large-scale rearrangements.</title>
        <authorList>
            <person name="Losada L."/>
            <person name="Ronning C.M."/>
            <person name="DeShazer D."/>
            <person name="Woods D."/>
            <person name="Fedorova N."/>
            <person name="Kim H.S."/>
            <person name="Shabalina S.A."/>
            <person name="Pearson T.R."/>
            <person name="Brinkac L."/>
            <person name="Tan P."/>
            <person name="Nandi T."/>
            <person name="Crabtree J."/>
            <person name="Badger J."/>
            <person name="Beckstrom-Sternberg S."/>
            <person name="Saqib M."/>
            <person name="Schutzer S.E."/>
            <person name="Keim P."/>
            <person name="Nierman W.C."/>
        </authorList>
    </citation>
    <scope>NUCLEOTIDE SEQUENCE [LARGE SCALE GENOMIC DNA]</scope>
    <source>
        <strain>668</strain>
    </source>
</reference>
<accession>A3N5K8</accession>
<keyword id="KW-0067">ATP-binding</keyword>
<keyword id="KW-0342">GTP-binding</keyword>
<keyword id="KW-0547">Nucleotide-binding</keyword>
<organism>
    <name type="scientific">Burkholderia pseudomallei (strain 668)</name>
    <dbReference type="NCBI Taxonomy" id="320373"/>
    <lineage>
        <taxon>Bacteria</taxon>
        <taxon>Pseudomonadati</taxon>
        <taxon>Pseudomonadota</taxon>
        <taxon>Betaproteobacteria</taxon>
        <taxon>Burkholderiales</taxon>
        <taxon>Burkholderiaceae</taxon>
        <taxon>Burkholderia</taxon>
        <taxon>pseudomallei group</taxon>
    </lineage>
</organism>
<feature type="chain" id="PRO_1000056813" description="Nucleotide-binding protein BURPS668_0577">
    <location>
        <begin position="1"/>
        <end position="297"/>
    </location>
</feature>
<feature type="binding site" evidence="1">
    <location>
        <begin position="8"/>
        <end position="15"/>
    </location>
    <ligand>
        <name>ATP</name>
        <dbReference type="ChEBI" id="CHEBI:30616"/>
    </ligand>
</feature>
<feature type="binding site" evidence="1">
    <location>
        <begin position="57"/>
        <end position="60"/>
    </location>
    <ligand>
        <name>GTP</name>
        <dbReference type="ChEBI" id="CHEBI:37565"/>
    </ligand>
</feature>
<proteinExistence type="inferred from homology"/>